<protein>
    <recommendedName>
        <fullName>Alpha-(1,6)-fucosyltransferase</fullName>
        <shortName>Alpha1-6FucT</shortName>
        <ecNumber>2.4.1.68</ecNumber>
    </recommendedName>
    <alternativeName>
        <fullName>Fucosyltransferase 8</fullName>
    </alternativeName>
    <alternativeName>
        <fullName>GDP-L-Fuc:N-acetyl-beta-D-glucosaminide alpha1,6-fucosyltransferase</fullName>
    </alternativeName>
    <alternativeName>
        <fullName>GDP-fucose--glycoprotein fucosyltransferase</fullName>
    </alternativeName>
    <alternativeName>
        <fullName>Glycoprotein 6-alpha-L-fucosyltransferase</fullName>
    </alternativeName>
</protein>
<name>FUT8_HUMAN</name>
<proteinExistence type="evidence at protein level"/>
<reference key="1">
    <citation type="journal article" date="1997" name="J. Biochem.">
        <title>Purification and cDNA cloning of GDP-L-Fuc:N-acetyl-beta-D-glucosaminide:alpha1-6 fucosyltransferase (alpha1-6 FucT) from human gastric cancer MKN45 cells.</title>
        <authorList>
            <person name="Yanagidani S."/>
            <person name="Uozumi N."/>
            <person name="Ihara Y."/>
            <person name="Miyoshi E."/>
            <person name="Yamaguchi N."/>
            <person name="Taniguchi N."/>
        </authorList>
    </citation>
    <scope>NUCLEOTIDE SEQUENCE [MRNA] (ISOFORM 1)</scope>
    <scope>FUNCTION</scope>
</reference>
<reference key="2">
    <citation type="submission" date="1998-08" db="EMBL/GenBank/DDBJ databases">
        <title>Differential splice variants of human FUT8 embryonic cDNA.</title>
        <authorList>
            <person name="Cailleau A."/>
            <person name="Balanzino L."/>
            <person name="Candelier J.J."/>
            <person name="Oriol R."/>
            <person name="Mollicone R."/>
        </authorList>
    </citation>
    <scope>NUCLEOTIDE SEQUENCE [MRNA] (ISOFORM 1)</scope>
    <source>
        <tissue>Embryo</tissue>
    </source>
</reference>
<reference key="3">
    <citation type="journal article" date="2000" name="Glycobiology">
        <title>Genomic structure and promoter analysis of the human alpha1,6-fucosyltransferase gene (FUT8).</title>
        <authorList>
            <person name="Yamaguchi Y."/>
            <person name="Ikeda Y."/>
            <person name="Takahashi T."/>
            <person name="Ihara H."/>
            <person name="Tanaka T."/>
            <person name="Sasho C."/>
            <person name="Uozumi N."/>
            <person name="Yanagidani S."/>
            <person name="Inoue S."/>
            <person name="Fujii J."/>
            <person name="Taniguchi N."/>
        </authorList>
    </citation>
    <scope>NUCLEOTIDE SEQUENCE [GENOMIC DNA / MRNA] (ISOFORMS 1 AND 2)</scope>
</reference>
<reference key="4">
    <citation type="journal article" date="2004" name="Glycobiology">
        <title>Activity and tissue distribution of splice variants of alpha6-fucosyltransferase in human embryogenesis.</title>
        <authorList>
            <person name="Martinez-Duncker I."/>
            <person name="Michalski J.C."/>
            <person name="Bauvy C."/>
            <person name="Candelier J.J."/>
            <person name="Mennesson B."/>
            <person name="Codogno P."/>
            <person name="Oriol R."/>
            <person name="Mollicone R."/>
        </authorList>
    </citation>
    <scope>NUCLEOTIDE SEQUENCE [MRNA] (ISOFORM 4)</scope>
    <scope>ALTERNATIVE SPLICING</scope>
    <source>
        <tissue>Embryo</tissue>
    </source>
</reference>
<reference key="5">
    <citation type="journal article" date="2004" name="Nat. Genet.">
        <title>Complete sequencing and characterization of 21,243 full-length human cDNAs.</title>
        <authorList>
            <person name="Ota T."/>
            <person name="Suzuki Y."/>
            <person name="Nishikawa T."/>
            <person name="Otsuki T."/>
            <person name="Sugiyama T."/>
            <person name="Irie R."/>
            <person name="Wakamatsu A."/>
            <person name="Hayashi K."/>
            <person name="Sato H."/>
            <person name="Nagai K."/>
            <person name="Kimura K."/>
            <person name="Makita H."/>
            <person name="Sekine M."/>
            <person name="Obayashi M."/>
            <person name="Nishi T."/>
            <person name="Shibahara T."/>
            <person name="Tanaka T."/>
            <person name="Ishii S."/>
            <person name="Yamamoto J."/>
            <person name="Saito K."/>
            <person name="Kawai Y."/>
            <person name="Isono Y."/>
            <person name="Nakamura Y."/>
            <person name="Nagahari K."/>
            <person name="Murakami K."/>
            <person name="Yasuda T."/>
            <person name="Iwayanagi T."/>
            <person name="Wagatsuma M."/>
            <person name="Shiratori A."/>
            <person name="Sudo H."/>
            <person name="Hosoiri T."/>
            <person name="Kaku Y."/>
            <person name="Kodaira H."/>
            <person name="Kondo H."/>
            <person name="Sugawara M."/>
            <person name="Takahashi M."/>
            <person name="Kanda K."/>
            <person name="Yokoi T."/>
            <person name="Furuya T."/>
            <person name="Kikkawa E."/>
            <person name="Omura Y."/>
            <person name="Abe K."/>
            <person name="Kamihara K."/>
            <person name="Katsuta N."/>
            <person name="Sato K."/>
            <person name="Tanikawa M."/>
            <person name="Yamazaki M."/>
            <person name="Ninomiya K."/>
            <person name="Ishibashi T."/>
            <person name="Yamashita H."/>
            <person name="Murakawa K."/>
            <person name="Fujimori K."/>
            <person name="Tanai H."/>
            <person name="Kimata M."/>
            <person name="Watanabe M."/>
            <person name="Hiraoka S."/>
            <person name="Chiba Y."/>
            <person name="Ishida S."/>
            <person name="Ono Y."/>
            <person name="Takiguchi S."/>
            <person name="Watanabe S."/>
            <person name="Yosida M."/>
            <person name="Hotuta T."/>
            <person name="Kusano J."/>
            <person name="Kanehori K."/>
            <person name="Takahashi-Fujii A."/>
            <person name="Hara H."/>
            <person name="Tanase T.-O."/>
            <person name="Nomura Y."/>
            <person name="Togiya S."/>
            <person name="Komai F."/>
            <person name="Hara R."/>
            <person name="Takeuchi K."/>
            <person name="Arita M."/>
            <person name="Imose N."/>
            <person name="Musashino K."/>
            <person name="Yuuki H."/>
            <person name="Oshima A."/>
            <person name="Sasaki N."/>
            <person name="Aotsuka S."/>
            <person name="Yoshikawa Y."/>
            <person name="Matsunawa H."/>
            <person name="Ichihara T."/>
            <person name="Shiohata N."/>
            <person name="Sano S."/>
            <person name="Moriya S."/>
            <person name="Momiyama H."/>
            <person name="Satoh N."/>
            <person name="Takami S."/>
            <person name="Terashima Y."/>
            <person name="Suzuki O."/>
            <person name="Nakagawa S."/>
            <person name="Senoh A."/>
            <person name="Mizoguchi H."/>
            <person name="Goto Y."/>
            <person name="Shimizu F."/>
            <person name="Wakebe H."/>
            <person name="Hishigaki H."/>
            <person name="Watanabe T."/>
            <person name="Sugiyama A."/>
            <person name="Takemoto M."/>
            <person name="Kawakami B."/>
            <person name="Yamazaki M."/>
            <person name="Watanabe K."/>
            <person name="Kumagai A."/>
            <person name="Itakura S."/>
            <person name="Fukuzumi Y."/>
            <person name="Fujimori Y."/>
            <person name="Komiyama M."/>
            <person name="Tashiro H."/>
            <person name="Tanigami A."/>
            <person name="Fujiwara T."/>
            <person name="Ono T."/>
            <person name="Yamada K."/>
            <person name="Fujii Y."/>
            <person name="Ozaki K."/>
            <person name="Hirao M."/>
            <person name="Ohmori Y."/>
            <person name="Kawabata A."/>
            <person name="Hikiji T."/>
            <person name="Kobatake N."/>
            <person name="Inagaki H."/>
            <person name="Ikema Y."/>
            <person name="Okamoto S."/>
            <person name="Okitani R."/>
            <person name="Kawakami T."/>
            <person name="Noguchi S."/>
            <person name="Itoh T."/>
            <person name="Shigeta K."/>
            <person name="Senba T."/>
            <person name="Matsumura K."/>
            <person name="Nakajima Y."/>
            <person name="Mizuno T."/>
            <person name="Morinaga M."/>
            <person name="Sasaki M."/>
            <person name="Togashi T."/>
            <person name="Oyama M."/>
            <person name="Hata H."/>
            <person name="Watanabe M."/>
            <person name="Komatsu T."/>
            <person name="Mizushima-Sugano J."/>
            <person name="Satoh T."/>
            <person name="Shirai Y."/>
            <person name="Takahashi Y."/>
            <person name="Nakagawa K."/>
            <person name="Okumura K."/>
            <person name="Nagase T."/>
            <person name="Nomura N."/>
            <person name="Kikuchi H."/>
            <person name="Masuho Y."/>
            <person name="Yamashita R."/>
            <person name="Nakai K."/>
            <person name="Yada T."/>
            <person name="Nakamura Y."/>
            <person name="Ohara O."/>
            <person name="Isogai T."/>
            <person name="Sugano S."/>
        </authorList>
    </citation>
    <scope>NUCLEOTIDE SEQUENCE [LARGE SCALE MRNA] (ISOFORM 3)</scope>
    <source>
        <tissue>Amygdala</tissue>
    </source>
</reference>
<reference key="6">
    <citation type="journal article" date="2003" name="Nature">
        <title>The DNA sequence and analysis of human chromosome 14.</title>
        <authorList>
            <person name="Heilig R."/>
            <person name="Eckenberg R."/>
            <person name="Petit J.-L."/>
            <person name="Fonknechten N."/>
            <person name="Da Silva C."/>
            <person name="Cattolico L."/>
            <person name="Levy M."/>
            <person name="Barbe V."/>
            <person name="De Berardinis V."/>
            <person name="Ureta-Vidal A."/>
            <person name="Pelletier E."/>
            <person name="Vico V."/>
            <person name="Anthouard V."/>
            <person name="Rowen L."/>
            <person name="Madan A."/>
            <person name="Qin S."/>
            <person name="Sun H."/>
            <person name="Du H."/>
            <person name="Pepin K."/>
            <person name="Artiguenave F."/>
            <person name="Robert C."/>
            <person name="Cruaud C."/>
            <person name="Bruels T."/>
            <person name="Jaillon O."/>
            <person name="Friedlander L."/>
            <person name="Samson G."/>
            <person name="Brottier P."/>
            <person name="Cure S."/>
            <person name="Segurens B."/>
            <person name="Aniere F."/>
            <person name="Samain S."/>
            <person name="Crespeau H."/>
            <person name="Abbasi N."/>
            <person name="Aiach N."/>
            <person name="Boscus D."/>
            <person name="Dickhoff R."/>
            <person name="Dors M."/>
            <person name="Dubois I."/>
            <person name="Friedman C."/>
            <person name="Gouyvenoux M."/>
            <person name="James R."/>
            <person name="Madan A."/>
            <person name="Mairey-Estrada B."/>
            <person name="Mangenot S."/>
            <person name="Martins N."/>
            <person name="Menard M."/>
            <person name="Oztas S."/>
            <person name="Ratcliffe A."/>
            <person name="Shaffer T."/>
            <person name="Trask B."/>
            <person name="Vacherie B."/>
            <person name="Bellemere C."/>
            <person name="Belser C."/>
            <person name="Besnard-Gonnet M."/>
            <person name="Bartol-Mavel D."/>
            <person name="Boutard M."/>
            <person name="Briez-Silla S."/>
            <person name="Combette S."/>
            <person name="Dufosse-Laurent V."/>
            <person name="Ferron C."/>
            <person name="Lechaplais C."/>
            <person name="Louesse C."/>
            <person name="Muselet D."/>
            <person name="Magdelenat G."/>
            <person name="Pateau E."/>
            <person name="Petit E."/>
            <person name="Sirvain-Trukniewicz P."/>
            <person name="Trybou A."/>
            <person name="Vega-Czarny N."/>
            <person name="Bataille E."/>
            <person name="Bluet E."/>
            <person name="Bordelais I."/>
            <person name="Dubois M."/>
            <person name="Dumont C."/>
            <person name="Guerin T."/>
            <person name="Haffray S."/>
            <person name="Hammadi R."/>
            <person name="Muanga J."/>
            <person name="Pellouin V."/>
            <person name="Robert D."/>
            <person name="Wunderle E."/>
            <person name="Gauguet G."/>
            <person name="Roy A."/>
            <person name="Sainte-Marthe L."/>
            <person name="Verdier J."/>
            <person name="Verdier-Discala C."/>
            <person name="Hillier L.W."/>
            <person name="Fulton L."/>
            <person name="McPherson J."/>
            <person name="Matsuda F."/>
            <person name="Wilson R."/>
            <person name="Scarpelli C."/>
            <person name="Gyapay G."/>
            <person name="Wincker P."/>
            <person name="Saurin W."/>
            <person name="Quetier F."/>
            <person name="Waterston R."/>
            <person name="Hood L."/>
            <person name="Weissenbach J."/>
        </authorList>
    </citation>
    <scope>NUCLEOTIDE SEQUENCE [LARGE SCALE GENOMIC DNA]</scope>
</reference>
<reference key="7">
    <citation type="journal article" date="2004" name="Genome Res.">
        <title>The status, quality, and expansion of the NIH full-length cDNA project: the Mammalian Gene Collection (MGC).</title>
        <authorList>
            <consortium name="The MGC Project Team"/>
        </authorList>
    </citation>
    <scope>NUCLEOTIDE SEQUENCE [LARGE SCALE MRNA] (ISOFORM 4)</scope>
    <source>
        <tissue>Lung</tissue>
    </source>
</reference>
<reference key="8">
    <citation type="journal article" date="2000" name="Glycobiology">
        <title>A sequence motif involved in the donor substrate binding by alpha1,6-fucosyltransferase: the role of the conserved arginine residues.</title>
        <authorList>
            <person name="Takahashi T."/>
            <person name="Ikeda Y."/>
            <person name="Tateishi A."/>
            <person name="Yamaguchi Y."/>
            <person name="Ishikawa M."/>
            <person name="Taniguchi N."/>
        </authorList>
    </citation>
    <scope>DONOR SUBSTRATE-BINDING</scope>
    <scope>MUTAGENESIS OF ARG-365 AND ARG-366</scope>
</reference>
<reference key="9">
    <citation type="journal article" date="2014" name="Cell">
        <title>A secreted tyrosine kinase acts in the extracellular environment.</title>
        <authorList>
            <person name="Bordoli M.R."/>
            <person name="Yum J."/>
            <person name="Breitkopf S.B."/>
            <person name="Thon J.N."/>
            <person name="Italiano J.E. Jr."/>
            <person name="Xiao J."/>
            <person name="Worby C."/>
            <person name="Wong S.K."/>
            <person name="Lin G."/>
            <person name="Edenius M."/>
            <person name="Keller T.L."/>
            <person name="Asara J.M."/>
            <person name="Dixon J.E."/>
            <person name="Yeo C.Y."/>
            <person name="Whitman M."/>
        </authorList>
    </citation>
    <scope>PHOSPHORYLATION</scope>
</reference>
<reference key="10">
    <citation type="journal article" date="2018" name="Am. J. Hum. Genet.">
        <title>Biallelic Mutations in FUT8 Cause a Congenital Disorder of Glycosylation with Defective Fucosylation.</title>
        <authorList>
            <person name="Ng B.G."/>
            <person name="Xu G."/>
            <person name="Chandy N."/>
            <person name="Steyermark J."/>
            <person name="Shinde D.N."/>
            <person name="Radtke K."/>
            <person name="Raymond K."/>
            <person name="Lebrilla C.B."/>
            <person name="AlAsmari A."/>
            <person name="Suchy S.F."/>
            <person name="Powis Z."/>
            <person name="Faqeih E.A."/>
            <person name="Berry S.A."/>
            <person name="Kronn D.F."/>
            <person name="Freeze H.H."/>
        </authorList>
    </citation>
    <scope>INVOLVEMENT IN CDGF1</scope>
    <scope>VARIANTS CDGF1 239-ARG--LYS-575 DEL; 315-ARG--LYS-557 DEL AND GLY-337</scope>
    <scope>FUNCTION</scope>
    <scope>CHARACTERIZATION OF VARIANTS CDGF1 239-ARG--LYS-575 DEL; 315-ARG--LYS-557? DEL AND GLY-337</scope>
</reference>
<reference key="11">
    <citation type="journal article" date="2007" name="Glycobiology">
        <title>Crystal structure of mammalian alpha1,6-fucosyltransferase, FUT8.</title>
        <authorList>
            <person name="Ihara H."/>
            <person name="Ikeda Y."/>
            <person name="Toma S."/>
            <person name="Wang X."/>
            <person name="Suzuki T."/>
            <person name="Gu J."/>
            <person name="Miyoshi E."/>
            <person name="Tsukihara T."/>
            <person name="Honke K."/>
            <person name="Matsumoto A."/>
            <person name="Nakagawa A."/>
            <person name="Taniguchi N."/>
        </authorList>
    </citation>
    <scope>X-RAY CRYSTALLOGRAPHY (2.61 ANGSTROMS) OF 68-575</scope>
    <scope>FUNCTION</scope>
    <scope>CATALYTIC ACTIVITY</scope>
    <scope>DISULFIDE BOND</scope>
    <scope>MUTAGENESIS OF ARG-365; ASP-368; LYS-369; GLU-373; TYR-382; ASP-409; ASP-410; ASP-453 AND SER-469</scope>
</reference>
<reference key="12">
    <citation type="journal article" date="2019" name="Genet. Med.">
        <title>Autozygome and high throughput confirmation of disease genes candidacy.</title>
        <authorList>
            <person name="Maddirevula S."/>
            <person name="Alzahrani F."/>
            <person name="Al-Owain M."/>
            <person name="Al Muhaizea M.A."/>
            <person name="Kayyali H.R."/>
            <person name="AlHashem A."/>
            <person name="Rahbeeni Z."/>
            <person name="Al-Otaibi M."/>
            <person name="Alzaidan H.I."/>
            <person name="Balobaid A."/>
            <person name="El Khashab H.Y."/>
            <person name="Bubshait D.K."/>
            <person name="Faden M."/>
            <person name="Yamani S.A."/>
            <person name="Dabbagh O."/>
            <person name="Al-Mureikhi M."/>
            <person name="Jasser A.A."/>
            <person name="Alsaif H.S."/>
            <person name="Alluhaydan I."/>
            <person name="Seidahmed M.Z."/>
            <person name="Alabbasi B.H."/>
            <person name="Almogarri I."/>
            <person name="Kurdi W."/>
            <person name="Akleh H."/>
            <person name="Qari A."/>
            <person name="Al Tala S.M."/>
            <person name="Alhomaidi S."/>
            <person name="Kentab A.Y."/>
            <person name="Salih M.A."/>
            <person name="Chedrawi A."/>
            <person name="Alameer S."/>
            <person name="Tabarki B."/>
            <person name="Shamseldin H.E."/>
            <person name="Patel N."/>
            <person name="Ibrahim N."/>
            <person name="Abdulwahab F."/>
            <person name="Samira M."/>
            <person name="Goljan E."/>
            <person name="Abouelhoda M."/>
            <person name="Meyer B.F."/>
            <person name="Hashem M."/>
            <person name="Shaheen R."/>
            <person name="AlShahwan S."/>
            <person name="Alfadhel M."/>
            <person name="Ben-Omran T."/>
            <person name="Al-Qattan M.M."/>
            <person name="Monies D."/>
            <person name="Alkuraya F.S."/>
        </authorList>
    </citation>
    <scope>VARIANT CDGF1 315-ARG--LYS-575 DEL</scope>
</reference>
<comment type="function">
    <text evidence="7 9 11">Catalyzes the addition of fucose in alpha 1-6 linkage to the first GlcNAc residue, next to the peptide chains in N-glycans.</text>
</comment>
<comment type="catalytic activity">
    <reaction evidence="7">
        <text>N(4)-{beta-D-GlcNAc-(1-&gt;2)-alpha-D-Man-(1-&gt;3)-[beta-D-GlcNAc-(1-&gt;2)-alpha-D-Man-(1-&gt;6)]-beta-D-Man-(1-&gt;4)-beta-D-GlcNAc-(1-&gt;4)-beta-D-GlcNAc}-L-asparaginyl-[protein] + GDP-beta-L-fucose = an N(4)-{beta-D-GlcNAc-(1-&gt;2)-alpha-D-Man-(1-&gt;3)-[beta-D-GlcNAc-(1-&gt;2)-alpha-D-Man-(1-&gt;6)]-beta-D-Man-(1-&gt;4)-beta-D-GlcNAc-(1-&gt;4)-[alpha-L-Fuc-(1-&gt;6)]-beta-D-GlcNAc}-L-asparaginyl-[protein] + GDP + H(+)</text>
        <dbReference type="Rhea" id="RHEA:12985"/>
        <dbReference type="Rhea" id="RHEA-COMP:13526"/>
        <dbReference type="Rhea" id="RHEA-COMP:13532"/>
        <dbReference type="ChEBI" id="CHEBI:15378"/>
        <dbReference type="ChEBI" id="CHEBI:57273"/>
        <dbReference type="ChEBI" id="CHEBI:58189"/>
        <dbReference type="ChEBI" id="CHEBI:60651"/>
        <dbReference type="ChEBI" id="CHEBI:137207"/>
        <dbReference type="EC" id="2.4.1.68"/>
    </reaction>
</comment>
<comment type="pathway">
    <text>Protein modification; protein glycosylation.</text>
</comment>
<comment type="interaction">
    <interactant intactId="EBI-2869363">
        <id>Q9BYC5</id>
    </interactant>
    <interactant intactId="EBI-12017160">
        <id>Q96DT7-3</id>
        <label>ZBTB10</label>
    </interactant>
    <organismsDiffer>false</organismsDiffer>
    <experiments>3</experiments>
</comment>
<comment type="subcellular location">
    <subcellularLocation>
        <location evidence="1">Golgi apparatus</location>
        <location evidence="1">Golgi stack membrane</location>
        <topology evidence="1">Single-pass type II membrane protein</topology>
    </subcellularLocation>
    <text evidence="1">Membrane-bound form in trans cisternae of Golgi.</text>
</comment>
<comment type="alternative products">
    <event type="alternative splicing"/>
    <isoform>
        <id>Q9BYC5-1</id>
        <name>1</name>
        <sequence type="displayed"/>
    </isoform>
    <isoform>
        <id>Q9BYC5-2</id>
        <name>2</name>
        <name>Retinal</name>
        <sequence type="described" ref="VSP_001807 VSP_001808"/>
    </isoform>
    <isoform>
        <id>Q9BYC5-3</id>
        <name>3</name>
        <sequence type="described" ref="VSP_046837"/>
    </isoform>
    <isoform>
        <id>Q9BYC5-4</id>
        <name>4</name>
        <name>Retina-1</name>
        <name>Retina-2</name>
        <sequence type="described" ref="VSP_053361 VSP_053362"/>
    </isoform>
</comment>
<comment type="PTM">
    <text evidence="8">Tyrosine phosphorylated by PKDCC/VLK.</text>
</comment>
<comment type="disease" evidence="9 10">
    <disease id="DI-05266">
        <name>Congenital disorder of glycosylation with defective fucosylation 1</name>
        <acronym>CDGF1</acronym>
        <description>A form of congenital disorder of glycosylation, a genetically heterogeneous group of multisystem disorders caused by a defect in glycoprotein biosynthesis and characterized by under-glycosylated serum glycoproteins. Congenital disorders of glycosylation result in a wide variety of clinical features, such as defects in the nervous system development, psychomotor retardation, dysmorphic features, hypotonia, coagulation disorders, and immunodeficiency. The broad spectrum of features reflects the critical role of N-glycoproteins during embryonic development, differentiation, and maintenance of cell functions. CDGF1 is an autosomal recessive disorder, apparent from birth, characterized by poor growth, failure to thrive, hypotonia, skeletal anomalies, and delayed psychomotor development with intellectual disability.</description>
        <dbReference type="MIM" id="618005"/>
    </disease>
    <text>The disease is caused by variants affecting the gene represented in this entry.</text>
</comment>
<comment type="miscellaneous">
    <molecule>Isoform 4</molecule>
    <text evidence="16">Seems to be only expressed in retina, inactive as a fucosyltransferase.</text>
</comment>
<comment type="similarity">
    <text evidence="5">Belongs to the glycosyltransferase 23 family.</text>
</comment>
<comment type="online information" name="Functional Glycomics Gateway - GTase">
    <link uri="http://www.functionalglycomics.org/glycomics/molecule/jsp/glycoEnzyme/viewGlycoEnzyme.jsp?gbpId=gt_hum_605"/>
    <text>Fucosyltransferase 8</text>
</comment>
<comment type="online information" name="Atlas of Genetics and Cytogenetics in Oncology and Haematology">
    <link uri="https://atlasgeneticsoncology.org/gene/40649/FUT8"/>
</comment>
<gene>
    <name type="primary">FUT8</name>
</gene>
<evidence type="ECO:0000250" key="1"/>
<evidence type="ECO:0000250" key="2">
    <source>
        <dbReference type="UniProtKB" id="Q9WTS2"/>
    </source>
</evidence>
<evidence type="ECO:0000255" key="3"/>
<evidence type="ECO:0000255" key="4">
    <source>
        <dbReference type="PROSITE-ProRule" id="PRU00192"/>
    </source>
</evidence>
<evidence type="ECO:0000255" key="5">
    <source>
        <dbReference type="PROSITE-ProRule" id="PRU00992"/>
    </source>
</evidence>
<evidence type="ECO:0000269" key="6">
    <source>
    </source>
</evidence>
<evidence type="ECO:0000269" key="7">
    <source>
    </source>
</evidence>
<evidence type="ECO:0000269" key="8">
    <source>
    </source>
</evidence>
<evidence type="ECO:0000269" key="9">
    <source>
    </source>
</evidence>
<evidence type="ECO:0000269" key="10">
    <source>
    </source>
</evidence>
<evidence type="ECO:0000269" key="11">
    <source>
    </source>
</evidence>
<evidence type="ECO:0000303" key="12">
    <source>
    </source>
</evidence>
<evidence type="ECO:0000303" key="13">
    <source>
    </source>
</evidence>
<evidence type="ECO:0000303" key="14">
    <source>
    </source>
</evidence>
<evidence type="ECO:0000303" key="15">
    <source>
    </source>
</evidence>
<evidence type="ECO:0000305" key="16"/>
<evidence type="ECO:0007829" key="17">
    <source>
        <dbReference type="PDB" id="6X5H"/>
    </source>
</evidence>
<feature type="chain" id="PRO_0000080526" description="Alpha-(1,6)-fucosyltransferase">
    <location>
        <begin position="1"/>
        <end position="575"/>
    </location>
</feature>
<feature type="topological domain" description="Cytoplasmic" evidence="3">
    <location>
        <begin position="1"/>
        <end position="9"/>
    </location>
</feature>
<feature type="transmembrane region" description="Helical; Signal-anchor for type II membrane protein" evidence="3">
    <location>
        <begin position="10"/>
        <end position="30"/>
    </location>
</feature>
<feature type="topological domain" description="Lumenal" evidence="3">
    <location>
        <begin position="31"/>
        <end position="575"/>
    </location>
</feature>
<feature type="domain" description="GT23" evidence="5">
    <location>
        <begin position="206"/>
        <end position="493"/>
    </location>
</feature>
<feature type="domain" description="SH3" evidence="4">
    <location>
        <begin position="502"/>
        <end position="563"/>
    </location>
</feature>
<feature type="region of interest" description="Important for donor substrate binding">
    <location>
        <begin position="365"/>
        <end position="366"/>
    </location>
</feature>
<feature type="short sequence motif" description="SH3-binding" evidence="3">
    <location>
        <begin position="299"/>
        <end position="305"/>
    </location>
</feature>
<feature type="modified residue" description="Phosphoserine" evidence="2">
    <location>
        <position position="278"/>
    </location>
</feature>
<feature type="disulfide bond" evidence="7">
    <location>
        <begin position="204"/>
        <end position="266"/>
    </location>
</feature>
<feature type="disulfide bond" evidence="7">
    <location>
        <begin position="212"/>
        <end position="230"/>
    </location>
</feature>
<feature type="disulfide bond" evidence="7">
    <location>
        <begin position="218"/>
        <end position="222"/>
    </location>
</feature>
<feature type="disulfide bond" evidence="7">
    <location>
        <begin position="465"/>
        <end position="472"/>
    </location>
</feature>
<feature type="splice variant" id="VSP_046837" description="In isoform 3." evidence="14">
    <location>
        <begin position="1"/>
        <end position="163"/>
    </location>
</feature>
<feature type="splice variant" id="VSP_053361" description="In isoform 4." evidence="13 15">
    <original>MRPWTGSWRWIMLI</original>
    <variation>MHRQIWHLHWTLVR</variation>
    <location>
        <begin position="1"/>
        <end position="14"/>
    </location>
</feature>
<feature type="splice variant" id="VSP_053362" description="In isoform 4." evidence="13 15">
    <location>
        <begin position="15"/>
        <end position="420"/>
    </location>
</feature>
<feature type="splice variant" id="VSP_001807" description="In isoform 2." evidence="12">
    <original>EVKDKNVQVVELPIVDSLHPRPPYLPLAVPEDLADRLVRVHGDPAVWWVS</original>
    <variation>TPIMNLLVITLFPGQLDCTIDTQKIHFVE</variation>
    <location>
        <begin position="280"/>
        <end position="329"/>
    </location>
</feature>
<feature type="splice variant" id="VSP_001808" description="In isoform 2." evidence="12">
    <location>
        <begin position="330"/>
        <end position="575"/>
    </location>
</feature>
<feature type="sequence variant" id="VAR_054038" description="In dbSNP:rs2229678.">
    <original>K</original>
    <variation>Q</variation>
    <location>
        <position position="101"/>
    </location>
</feature>
<feature type="sequence variant" id="VAR_080978" description="In CDGF1; drastic decrease of protein level in patient's fibroblasts and complete loss of total core fucosylated N-glycans in serum and fibroblasts compared to controls." evidence="9">
    <location>
        <begin position="239"/>
        <end position="575"/>
    </location>
</feature>
<feature type="sequence variant" id="VAR_033537" description="In dbSNP:rs35949016.">
    <original>T</original>
    <variation>K</variation>
    <location>
        <position position="267"/>
    </location>
</feature>
<feature type="sequence variant" id="VAR_082143" description="In CDGF1; uncertain significance." evidence="10">
    <location>
        <begin position="315"/>
        <end position="575"/>
    </location>
</feature>
<feature type="sequence variant" id="VAR_080979" description="In CDGF1; complete loss of total core fucosylated N-glycans in patient's serum and fibroblasts compared to controls." evidence="9">
    <location>
        <begin position="315"/>
        <end position="557"/>
    </location>
</feature>
<feature type="sequence variant" id="VAR_080980" description="In CDGF1; drastic decrease of protein level in patient's fibroblasts and complete loss of total core fucosylated N-glycans in serum and fibroblasts compared to controls." evidence="9">
    <original>R</original>
    <variation>G</variation>
    <location>
        <position position="337"/>
    </location>
</feature>
<feature type="mutagenesis site" description="Complete loss of activity." evidence="6 7">
    <original>R</original>
    <variation>A</variation>
    <variation>K</variation>
    <location>
        <position position="365"/>
    </location>
</feature>
<feature type="mutagenesis site" description="Decreases activity to 3%." evidence="6">
    <original>R</original>
    <variation>A</variation>
    <variation>K</variation>
    <location>
        <position position="366"/>
    </location>
</feature>
<feature type="mutagenesis site" description="Loss of enzyme activity." evidence="7">
    <original>D</original>
    <variation>A</variation>
    <location>
        <position position="368"/>
    </location>
</feature>
<feature type="mutagenesis site" description="Loss of enzyme activity." evidence="7">
    <original>K</original>
    <variation>A</variation>
    <location>
        <position position="369"/>
    </location>
</feature>
<feature type="mutagenesis site" description="Loss of enzyme activity." evidence="7">
    <original>E</original>
    <variation>A</variation>
    <location>
        <position position="373"/>
    </location>
</feature>
<feature type="mutagenesis site" description="Loss of enzyme activity." evidence="7">
    <original>Y</original>
    <variation>A</variation>
    <location>
        <position position="382"/>
    </location>
</feature>
<feature type="mutagenesis site" description="Loss of enzyme activity." evidence="7">
    <original>D</original>
    <variation>A</variation>
    <location>
        <position position="409"/>
    </location>
</feature>
<feature type="mutagenesis site" description="No effect on enzyme activity." evidence="7">
    <original>D</original>
    <variation>A</variation>
    <location>
        <position position="410"/>
    </location>
</feature>
<feature type="mutagenesis site" description="Loss of enzyme activity." evidence="7">
    <original>D</original>
    <variation>A</variation>
    <location>
        <position position="453"/>
    </location>
</feature>
<feature type="mutagenesis site" description="Loss of enzyme activity." evidence="7">
    <original>S</original>
    <variation>A</variation>
    <location>
        <position position="469"/>
    </location>
</feature>
<feature type="sequence conflict" description="In Ref. 5; BAG57538." evidence="16" ref="5">
    <original>I</original>
    <variation>T</variation>
    <location>
        <position position="214"/>
    </location>
</feature>
<feature type="helix" evidence="17">
    <location>
        <begin position="110"/>
        <end position="137"/>
    </location>
</feature>
<feature type="helix" evidence="17">
    <location>
        <begin position="142"/>
        <end position="172"/>
    </location>
</feature>
<feature type="turn" evidence="17">
    <location>
        <begin position="173"/>
        <end position="175"/>
    </location>
</feature>
<feature type="helix" evidence="17">
    <location>
        <begin position="176"/>
        <end position="199"/>
    </location>
</feature>
<feature type="helix" evidence="17">
    <location>
        <begin position="204"/>
        <end position="206"/>
    </location>
</feature>
<feature type="strand" evidence="17">
    <location>
        <begin position="209"/>
        <end position="213"/>
    </location>
</feature>
<feature type="helix" evidence="17">
    <location>
        <begin position="220"/>
        <end position="237"/>
    </location>
</feature>
<feature type="strand" evidence="17">
    <location>
        <begin position="240"/>
        <end position="244"/>
    </location>
</feature>
<feature type="helix" evidence="17">
    <location>
        <begin position="255"/>
        <end position="257"/>
    </location>
</feature>
<feature type="strand" evidence="17">
    <location>
        <begin position="274"/>
        <end position="276"/>
    </location>
</feature>
<feature type="turn" evidence="17">
    <location>
        <begin position="280"/>
        <end position="285"/>
    </location>
</feature>
<feature type="strand" evidence="17">
    <location>
        <begin position="287"/>
        <end position="290"/>
    </location>
</feature>
<feature type="helix" evidence="17">
    <location>
        <begin position="294"/>
        <end position="296"/>
    </location>
</feature>
<feature type="helix" evidence="17">
    <location>
        <begin position="310"/>
        <end position="319"/>
    </location>
</feature>
<feature type="helix" evidence="17">
    <location>
        <begin position="323"/>
        <end position="335"/>
    </location>
</feature>
<feature type="helix" evidence="17">
    <location>
        <begin position="340"/>
        <end position="353"/>
    </location>
</feature>
<feature type="strand" evidence="17">
    <location>
        <begin position="357"/>
        <end position="364"/>
    </location>
</feature>
<feature type="helix" evidence="17">
    <location>
        <begin position="367"/>
        <end position="369"/>
    </location>
</feature>
<feature type="turn" evidence="17">
    <location>
        <begin position="371"/>
        <end position="373"/>
    </location>
</feature>
<feature type="helix" evidence="17">
    <location>
        <begin position="379"/>
        <end position="396"/>
    </location>
</feature>
<feature type="strand" evidence="17">
    <location>
        <begin position="400"/>
        <end position="409"/>
    </location>
</feature>
<feature type="helix" evidence="17">
    <location>
        <begin position="413"/>
        <end position="420"/>
    </location>
</feature>
<feature type="strand" evidence="17">
    <location>
        <begin position="424"/>
        <end position="427"/>
    </location>
</feature>
<feature type="helix" evidence="17">
    <location>
        <begin position="430"/>
        <end position="435"/>
    </location>
</feature>
<feature type="helix" evidence="17">
    <location>
        <begin position="438"/>
        <end position="440"/>
    </location>
</feature>
<feature type="strand" evidence="17">
    <location>
        <begin position="441"/>
        <end position="443"/>
    </location>
</feature>
<feature type="helix" evidence="17">
    <location>
        <begin position="444"/>
        <end position="459"/>
    </location>
</feature>
<feature type="strand" evidence="17">
    <location>
        <begin position="460"/>
        <end position="465"/>
    </location>
</feature>
<feature type="helix" evidence="17">
    <location>
        <begin position="470"/>
        <end position="480"/>
    </location>
</feature>
<feature type="strand" evidence="17">
    <location>
        <begin position="482"/>
        <end position="484"/>
    </location>
</feature>
<feature type="strand" evidence="17">
    <location>
        <begin position="490"/>
        <end position="494"/>
    </location>
</feature>
<feature type="strand" evidence="17">
    <location>
        <begin position="506"/>
        <end position="509"/>
    </location>
</feature>
<feature type="strand" evidence="17">
    <location>
        <begin position="528"/>
        <end position="534"/>
    </location>
</feature>
<feature type="strand" evidence="17">
    <location>
        <begin position="536"/>
        <end position="544"/>
    </location>
</feature>
<feature type="turn" evidence="17">
    <location>
        <begin position="545"/>
        <end position="548"/>
    </location>
</feature>
<feature type="strand" evidence="17">
    <location>
        <begin position="549"/>
        <end position="554"/>
    </location>
</feature>
<feature type="helix" evidence="17">
    <location>
        <begin position="555"/>
        <end position="557"/>
    </location>
</feature>
<feature type="strand" evidence="17">
    <location>
        <begin position="558"/>
        <end position="560"/>
    </location>
</feature>
<feature type="helix" evidence="17">
    <location>
        <begin position="571"/>
        <end position="573"/>
    </location>
</feature>
<sequence length="575" mass="66516">MRPWTGSWRWIMLILFAWGTLLFYIGGHLVRDNDHPDHSSRELSKILAKLERLKQQNEDLRRMAESLRIPEGPIDQGPAIGRVRVLEEQLVKAKEQIENYKKQTRNGLGKDHEILRRRIENGAKELWFFLQSELKKLKNLEGNELQRHADEFLLDLGHHERSIMTDLYYLSQTDGAGDWREKEAKDLTELVQRRITYLQNPKDCSKAKKLVCNINKGCGYGCQLHHVVYCFMIAYGTQRTLILESQNWRYATGGWETVFRPVSETCTDRSGISTGHWSGEVKDKNVQVVELPIVDSLHPRPPYLPLAVPEDLADRLVRVHGDPAVWWVSQFVKYLIRPQPWLEKEIEEATKKLGFKHPVIGVHVRRTDKVGTEAAFHPIEEYMVHVEEHFQLLARRMQVDKKRVYLATDDPSLLKEAKTKYPNYEFISDNSISWSAGLHNRYTENSLRGVILDIHFLSQADFLVCTFSSQVCRVAYEIMQTLHPDASANFHSLDDIYYFGGQNAHNQIAIYAHQPRTADEIPMEPGDIIGVAGNHWDGYSKGVNRKLGRTGLYPSYKVREKIETVKYPTYPEAEK</sequence>
<organism>
    <name type="scientific">Homo sapiens</name>
    <name type="common">Human</name>
    <dbReference type="NCBI Taxonomy" id="9606"/>
    <lineage>
        <taxon>Eukaryota</taxon>
        <taxon>Metazoa</taxon>
        <taxon>Chordata</taxon>
        <taxon>Craniata</taxon>
        <taxon>Vertebrata</taxon>
        <taxon>Euteleostomi</taxon>
        <taxon>Mammalia</taxon>
        <taxon>Eutheria</taxon>
        <taxon>Euarchontoglires</taxon>
        <taxon>Primates</taxon>
        <taxon>Haplorrhini</taxon>
        <taxon>Catarrhini</taxon>
        <taxon>Hominidae</taxon>
        <taxon>Homo</taxon>
    </lineage>
</organism>
<keyword id="KW-0002">3D-structure</keyword>
<keyword id="KW-0025">Alternative splicing</keyword>
<keyword id="KW-0900">Congenital disorder of glycosylation</keyword>
<keyword id="KW-0225">Disease variant</keyword>
<keyword id="KW-1015">Disulfide bond</keyword>
<keyword id="KW-0328">Glycosyltransferase</keyword>
<keyword id="KW-0333">Golgi apparatus</keyword>
<keyword id="KW-0472">Membrane</keyword>
<keyword id="KW-0597">Phosphoprotein</keyword>
<keyword id="KW-1267">Proteomics identification</keyword>
<keyword id="KW-1185">Reference proteome</keyword>
<keyword id="KW-0728">SH3 domain</keyword>
<keyword id="KW-0729">SH3-binding</keyword>
<keyword id="KW-0735">Signal-anchor</keyword>
<keyword id="KW-0808">Transferase</keyword>
<keyword id="KW-0812">Transmembrane</keyword>
<keyword id="KW-1133">Transmembrane helix</keyword>
<dbReference type="EC" id="2.4.1.68"/>
<dbReference type="EMBL" id="D89289">
    <property type="protein sequence ID" value="BAA19764.1"/>
    <property type="molecule type" value="mRNA"/>
</dbReference>
<dbReference type="EMBL" id="AH005745">
    <property type="protein sequence ID" value="AAB92372.2"/>
    <property type="molecule type" value="Genomic_DNA"/>
</dbReference>
<dbReference type="EMBL" id="Y17979">
    <property type="protein sequence ID" value="CAA76988.1"/>
    <property type="molecule type" value="mRNA"/>
</dbReference>
<dbReference type="EMBL" id="Y17976">
    <property type="protein sequence ID" value="CAA76985.1"/>
    <property type="molecule type" value="mRNA"/>
</dbReference>
<dbReference type="EMBL" id="Y17977">
    <property type="protein sequence ID" value="CAA76986.1"/>
    <property type="molecule type" value="mRNA"/>
</dbReference>
<dbReference type="EMBL" id="Y17978">
    <property type="protein sequence ID" value="CAA76987.1"/>
    <property type="molecule type" value="mRNA"/>
</dbReference>
<dbReference type="EMBL" id="AB049828">
    <property type="protein sequence ID" value="BAB40975.1"/>
    <property type="molecule type" value="Genomic_DNA"/>
</dbReference>
<dbReference type="EMBL" id="AB049740">
    <property type="protein sequence ID" value="BAB40929.2"/>
    <property type="molecule type" value="mRNA"/>
</dbReference>
<dbReference type="EMBL" id="AB032573">
    <property type="protein sequence ID" value="BAA92859.2"/>
    <property type="molecule type" value="Genomic_DNA"/>
</dbReference>
<dbReference type="EMBL" id="AB032573">
    <property type="protein sequence ID" value="BAA92858.1"/>
    <property type="molecule type" value="Genomic_DNA"/>
</dbReference>
<dbReference type="EMBL" id="AJ514324">
    <property type="protein sequence ID" value="CAD55804.1"/>
    <property type="molecule type" value="mRNA"/>
</dbReference>
<dbReference type="EMBL" id="AJ514325">
    <property type="protein sequence ID" value="CAD55805.1"/>
    <property type="molecule type" value="mRNA"/>
</dbReference>
<dbReference type="EMBL" id="AK294242">
    <property type="protein sequence ID" value="BAG57538.1"/>
    <property type="molecule type" value="mRNA"/>
</dbReference>
<dbReference type="EMBL" id="AL109847">
    <property type="status" value="NOT_ANNOTATED_CDS"/>
    <property type="molecule type" value="Genomic_DNA"/>
</dbReference>
<dbReference type="EMBL" id="AL161871">
    <property type="status" value="NOT_ANNOTATED_CDS"/>
    <property type="molecule type" value="Genomic_DNA"/>
</dbReference>
<dbReference type="EMBL" id="AL355840">
    <property type="status" value="NOT_ANNOTATED_CDS"/>
    <property type="molecule type" value="Genomic_DNA"/>
</dbReference>
<dbReference type="EMBL" id="AL359236">
    <property type="status" value="NOT_ANNOTATED_CDS"/>
    <property type="molecule type" value="Genomic_DNA"/>
</dbReference>
<dbReference type="EMBL" id="BC093889">
    <property type="protein sequence ID" value="AAH93889.1"/>
    <property type="molecule type" value="mRNA"/>
</dbReference>
<dbReference type="EMBL" id="BC101816">
    <property type="protein sequence ID" value="AAI01817.1"/>
    <property type="molecule type" value="mRNA"/>
</dbReference>
<dbReference type="CCDS" id="CCDS9775.1">
    <molecule id="Q9BYC5-1"/>
</dbReference>
<dbReference type="CCDS" id="CCDS9776.2">
    <molecule id="Q9BYC5-3"/>
</dbReference>
<dbReference type="PIR" id="JC5432">
    <property type="entry name" value="JC5432"/>
</dbReference>
<dbReference type="RefSeq" id="NP_001358462.1">
    <molecule id="Q9BYC5-1"/>
    <property type="nucleotide sequence ID" value="NM_001371533.1"/>
</dbReference>
<dbReference type="RefSeq" id="NP_001358463.1">
    <molecule id="Q9BYC5-1"/>
    <property type="nucleotide sequence ID" value="NM_001371534.1"/>
</dbReference>
<dbReference type="RefSeq" id="NP_004471.4">
    <molecule id="Q9BYC5-3"/>
    <property type="nucleotide sequence ID" value="NM_004480.4"/>
</dbReference>
<dbReference type="RefSeq" id="NP_835368.1">
    <molecule id="Q9BYC5-1"/>
    <property type="nucleotide sequence ID" value="NM_178155.3"/>
</dbReference>
<dbReference type="RefSeq" id="NP_835369.1">
    <molecule id="Q9BYC5-1"/>
    <property type="nucleotide sequence ID" value="NM_178156.2"/>
</dbReference>
<dbReference type="RefSeq" id="XP_047287137.1">
    <molecule id="Q9BYC5-1"/>
    <property type="nucleotide sequence ID" value="XM_047431181.1"/>
</dbReference>
<dbReference type="RefSeq" id="XP_054231711.1">
    <molecule id="Q9BYC5-1"/>
    <property type="nucleotide sequence ID" value="XM_054375736.1"/>
</dbReference>
<dbReference type="PDB" id="2DE0">
    <property type="method" value="X-ray"/>
    <property type="resolution" value="2.61 A"/>
    <property type="chains" value="X=68-575"/>
</dbReference>
<dbReference type="PDB" id="6VLD">
    <property type="method" value="X-ray"/>
    <property type="resolution" value="2.28 A"/>
    <property type="chains" value="A/B/G/H=105-575"/>
</dbReference>
<dbReference type="PDB" id="6VLE">
    <property type="method" value="X-ray"/>
    <property type="resolution" value="2.28 A"/>
    <property type="chains" value="A/B=105-575"/>
</dbReference>
<dbReference type="PDB" id="6X5H">
    <property type="method" value="X-ray"/>
    <property type="resolution" value="2.25 A"/>
    <property type="chains" value="A/B/C/D=41-575"/>
</dbReference>
<dbReference type="PDB" id="6X5R">
    <property type="method" value="X-ray"/>
    <property type="resolution" value="2.40 A"/>
    <property type="chains" value="A/B=41-575"/>
</dbReference>
<dbReference type="PDB" id="6X5S">
    <property type="method" value="X-ray"/>
    <property type="resolution" value="3.30 A"/>
    <property type="chains" value="A/B=108-573"/>
</dbReference>
<dbReference type="PDB" id="6X5T">
    <property type="method" value="X-ray"/>
    <property type="resolution" value="2.47 A"/>
    <property type="chains" value="A/B/C/D/E/F/G/H=41-575"/>
</dbReference>
<dbReference type="PDB" id="6X5U">
    <property type="method" value="X-ray"/>
    <property type="resolution" value="3.20 A"/>
    <property type="chains" value="A/B/C/D/E/F/G/H=41-575"/>
</dbReference>
<dbReference type="PDBsum" id="2DE0"/>
<dbReference type="PDBsum" id="6VLD"/>
<dbReference type="PDBsum" id="6VLE"/>
<dbReference type="PDBsum" id="6X5H"/>
<dbReference type="PDBsum" id="6X5R"/>
<dbReference type="PDBsum" id="6X5S"/>
<dbReference type="PDBsum" id="6X5T"/>
<dbReference type="PDBsum" id="6X5U"/>
<dbReference type="SMR" id="Q9BYC5"/>
<dbReference type="BioGRID" id="108806">
    <property type="interactions" value="178"/>
</dbReference>
<dbReference type="FunCoup" id="Q9BYC5">
    <property type="interactions" value="1166"/>
</dbReference>
<dbReference type="IntAct" id="Q9BYC5">
    <property type="interactions" value="104"/>
</dbReference>
<dbReference type="MINT" id="Q9BYC5"/>
<dbReference type="STRING" id="9606.ENSP00000353910"/>
<dbReference type="ChEMBL" id="CHEMBL3596087"/>
<dbReference type="CAZy" id="GT23">
    <property type="family name" value="Glycosyltransferase Family 23"/>
</dbReference>
<dbReference type="GlyGen" id="Q9BYC5">
    <property type="glycosylation" value="3 sites, 1 O-linked glycan (3 sites)"/>
</dbReference>
<dbReference type="iPTMnet" id="Q9BYC5"/>
<dbReference type="PhosphoSitePlus" id="Q9BYC5"/>
<dbReference type="SwissPalm" id="Q9BYC5"/>
<dbReference type="BioMuta" id="FUT8"/>
<dbReference type="DMDM" id="20138326"/>
<dbReference type="jPOST" id="Q9BYC5"/>
<dbReference type="MassIVE" id="Q9BYC5"/>
<dbReference type="PaxDb" id="9606-ENSP00000353910"/>
<dbReference type="PeptideAtlas" id="Q9BYC5"/>
<dbReference type="ProteomicsDB" id="33572"/>
<dbReference type="ProteomicsDB" id="70528"/>
<dbReference type="ProteomicsDB" id="79611">
    <molecule id="Q9BYC5-1"/>
</dbReference>
<dbReference type="ProteomicsDB" id="79612">
    <molecule id="Q9BYC5-2"/>
</dbReference>
<dbReference type="Pumba" id="Q9BYC5"/>
<dbReference type="Antibodypedia" id="24748">
    <property type="antibodies" value="244 antibodies from 28 providers"/>
</dbReference>
<dbReference type="DNASU" id="2530"/>
<dbReference type="Ensembl" id="ENST00000342677.10">
    <molecule id="Q9BYC5-2"/>
    <property type="protein sequence ID" value="ENSP00000345865.6"/>
    <property type="gene ID" value="ENSG00000033170.17"/>
</dbReference>
<dbReference type="Ensembl" id="ENST00000360689.9">
    <molecule id="Q9BYC5-1"/>
    <property type="protein sequence ID" value="ENSP00000353910.5"/>
    <property type="gene ID" value="ENSG00000033170.17"/>
</dbReference>
<dbReference type="Ensembl" id="ENST00000394586.6">
    <molecule id="Q9BYC5-1"/>
    <property type="protein sequence ID" value="ENSP00000378087.2"/>
    <property type="gene ID" value="ENSG00000033170.17"/>
</dbReference>
<dbReference type="Ensembl" id="ENST00000557164.5">
    <molecule id="Q9BYC5-3"/>
    <property type="protein sequence ID" value="ENSP00000452433.1"/>
    <property type="gene ID" value="ENSG00000033170.17"/>
</dbReference>
<dbReference type="Ensembl" id="ENST00000673929.1">
    <molecule id="Q9BYC5-1"/>
    <property type="protein sequence ID" value="ENSP00000501213.1"/>
    <property type="gene ID" value="ENSG00000033170.17"/>
</dbReference>
<dbReference type="GeneID" id="2530"/>
<dbReference type="KEGG" id="hsa:2530"/>
<dbReference type="MANE-Select" id="ENST00000673929.1">
    <property type="protein sequence ID" value="ENSP00000501213.1"/>
    <property type="RefSeq nucleotide sequence ID" value="NM_001371533.1"/>
    <property type="RefSeq protein sequence ID" value="NP_001358462.1"/>
</dbReference>
<dbReference type="UCSC" id="uc001xin.3">
    <molecule id="Q9BYC5-1"/>
    <property type="organism name" value="human"/>
</dbReference>
<dbReference type="AGR" id="HGNC:4019"/>
<dbReference type="CTD" id="2530"/>
<dbReference type="DisGeNET" id="2530"/>
<dbReference type="GeneCards" id="FUT8"/>
<dbReference type="HGNC" id="HGNC:4019">
    <property type="gene designation" value="FUT8"/>
</dbReference>
<dbReference type="HPA" id="ENSG00000033170">
    <property type="expression patterns" value="Low tissue specificity"/>
</dbReference>
<dbReference type="MalaCards" id="FUT8"/>
<dbReference type="MIM" id="602589">
    <property type="type" value="gene"/>
</dbReference>
<dbReference type="MIM" id="618005">
    <property type="type" value="phenotype"/>
</dbReference>
<dbReference type="neXtProt" id="NX_Q9BYC5"/>
<dbReference type="OpenTargets" id="ENSG00000033170"/>
<dbReference type="PharmGKB" id="PA28435"/>
<dbReference type="VEuPathDB" id="HostDB:ENSG00000033170"/>
<dbReference type="eggNOG" id="KOG3705">
    <property type="taxonomic scope" value="Eukaryota"/>
</dbReference>
<dbReference type="GeneTree" id="ENSGT00530000063737"/>
<dbReference type="HOGENOM" id="CLU_021940_1_0_1"/>
<dbReference type="InParanoid" id="Q9BYC5"/>
<dbReference type="OMA" id="SDGYEAW"/>
<dbReference type="OrthoDB" id="2014825at2759"/>
<dbReference type="PAN-GO" id="Q9BYC5">
    <property type="GO annotations" value="3 GO annotations based on evolutionary models"/>
</dbReference>
<dbReference type="PhylomeDB" id="Q9BYC5"/>
<dbReference type="TreeFam" id="TF106108"/>
<dbReference type="BioCyc" id="MetaCyc:HS00491-MONOMER"/>
<dbReference type="BRENDA" id="2.4.1.68">
    <property type="organism ID" value="2681"/>
</dbReference>
<dbReference type="PathwayCommons" id="Q9BYC5"/>
<dbReference type="Reactome" id="R-HSA-9694548">
    <property type="pathway name" value="Maturation of spike protein"/>
</dbReference>
<dbReference type="Reactome" id="R-HSA-975578">
    <property type="pathway name" value="Reactions specific to the complex N-glycan synthesis pathway"/>
</dbReference>
<dbReference type="SignaLink" id="Q9BYC5"/>
<dbReference type="UniPathway" id="UPA00378"/>
<dbReference type="BioGRID-ORCS" id="2530">
    <property type="hits" value="30 hits in 1156 CRISPR screens"/>
</dbReference>
<dbReference type="ChiTaRS" id="FUT8">
    <property type="organism name" value="human"/>
</dbReference>
<dbReference type="EvolutionaryTrace" id="Q9BYC5"/>
<dbReference type="GeneWiki" id="FUT8"/>
<dbReference type="GenomeRNAi" id="2530"/>
<dbReference type="Pharos" id="Q9BYC5">
    <property type="development level" value="Tbio"/>
</dbReference>
<dbReference type="PRO" id="PR:Q9BYC5"/>
<dbReference type="Proteomes" id="UP000005640">
    <property type="component" value="Chromosome 14"/>
</dbReference>
<dbReference type="RNAct" id="Q9BYC5">
    <property type="molecule type" value="protein"/>
</dbReference>
<dbReference type="Bgee" id="ENSG00000033170">
    <property type="expression patterns" value="Expressed in corpus callosum and 205 other cell types or tissues"/>
</dbReference>
<dbReference type="ExpressionAtlas" id="Q9BYC5">
    <property type="expression patterns" value="baseline and differential"/>
</dbReference>
<dbReference type="GO" id="GO:0070062">
    <property type="term" value="C:extracellular exosome"/>
    <property type="evidence" value="ECO:0007005"/>
    <property type="project" value="UniProtKB"/>
</dbReference>
<dbReference type="GO" id="GO:0005794">
    <property type="term" value="C:Golgi apparatus"/>
    <property type="evidence" value="ECO:0000303"/>
    <property type="project" value="UniProtKB"/>
</dbReference>
<dbReference type="GO" id="GO:0032580">
    <property type="term" value="C:Golgi cisterna membrane"/>
    <property type="evidence" value="ECO:0007669"/>
    <property type="project" value="UniProtKB-SubCell"/>
</dbReference>
<dbReference type="GO" id="GO:0000139">
    <property type="term" value="C:Golgi membrane"/>
    <property type="evidence" value="ECO:0000304"/>
    <property type="project" value="Reactome"/>
</dbReference>
<dbReference type="GO" id="GO:0016020">
    <property type="term" value="C:membrane"/>
    <property type="evidence" value="ECO:0007005"/>
    <property type="project" value="UniProtKB"/>
</dbReference>
<dbReference type="GO" id="GO:0046921">
    <property type="term" value="F:alpha-(1-&gt;6)-fucosyltransferase activity"/>
    <property type="evidence" value="ECO:0000318"/>
    <property type="project" value="GO_Central"/>
</dbReference>
<dbReference type="GO" id="GO:0008424">
    <property type="term" value="F:glycoprotein 6-alpha-L-fucosyltransferase activity"/>
    <property type="evidence" value="ECO:0000314"/>
    <property type="project" value="UniProtKB"/>
</dbReference>
<dbReference type="GO" id="GO:0017124">
    <property type="term" value="F:SH3 domain binding"/>
    <property type="evidence" value="ECO:0007669"/>
    <property type="project" value="UniProtKB-KW"/>
</dbReference>
<dbReference type="GO" id="GO:0010761">
    <property type="term" value="P:fibroblast migration"/>
    <property type="evidence" value="ECO:0007669"/>
    <property type="project" value="Ensembl"/>
</dbReference>
<dbReference type="GO" id="GO:0046368">
    <property type="term" value="P:GDP-L-fucose metabolic process"/>
    <property type="evidence" value="ECO:0000314"/>
    <property type="project" value="UniProtKB"/>
</dbReference>
<dbReference type="GO" id="GO:0001701">
    <property type="term" value="P:in utero embryonic development"/>
    <property type="evidence" value="ECO:0000303"/>
    <property type="project" value="UniProtKB"/>
</dbReference>
<dbReference type="GO" id="GO:0007229">
    <property type="term" value="P:integrin-mediated signaling pathway"/>
    <property type="evidence" value="ECO:0007669"/>
    <property type="project" value="Ensembl"/>
</dbReference>
<dbReference type="GO" id="GO:0042355">
    <property type="term" value="P:L-fucose catabolic process"/>
    <property type="evidence" value="ECO:0000303"/>
    <property type="project" value="UniProtKB"/>
</dbReference>
<dbReference type="GO" id="GO:0036071">
    <property type="term" value="P:N-glycan fucosylation"/>
    <property type="evidence" value="ECO:0000318"/>
    <property type="project" value="GO_Central"/>
</dbReference>
<dbReference type="GO" id="GO:0006491">
    <property type="term" value="P:N-glycan processing"/>
    <property type="evidence" value="ECO:0000304"/>
    <property type="project" value="UniProtKB"/>
</dbReference>
<dbReference type="GO" id="GO:0009312">
    <property type="term" value="P:oligosaccharide biosynthetic process"/>
    <property type="evidence" value="ECO:0000304"/>
    <property type="project" value="ProtInc"/>
</dbReference>
<dbReference type="GO" id="GO:0006487">
    <property type="term" value="P:protein N-linked glycosylation"/>
    <property type="evidence" value="ECO:0000318"/>
    <property type="project" value="GO_Central"/>
</dbReference>
<dbReference type="GO" id="GO:0018279">
    <property type="term" value="P:protein N-linked glycosylation via asparagine"/>
    <property type="evidence" value="ECO:0000314"/>
    <property type="project" value="UniProtKB"/>
</dbReference>
<dbReference type="GO" id="GO:0043112">
    <property type="term" value="P:receptor metabolic process"/>
    <property type="evidence" value="ECO:0007669"/>
    <property type="project" value="Ensembl"/>
</dbReference>
<dbReference type="GO" id="GO:1900407">
    <property type="term" value="P:regulation of cellular response to oxidative stress"/>
    <property type="evidence" value="ECO:0007669"/>
    <property type="project" value="Ensembl"/>
</dbReference>
<dbReference type="GO" id="GO:0010468">
    <property type="term" value="P:regulation of gene expression"/>
    <property type="evidence" value="ECO:0007669"/>
    <property type="project" value="Ensembl"/>
</dbReference>
<dbReference type="GO" id="GO:0007585">
    <property type="term" value="P:respiratory gaseous exchange by respiratory system"/>
    <property type="evidence" value="ECO:0007669"/>
    <property type="project" value="Ensembl"/>
</dbReference>
<dbReference type="GO" id="GO:0007179">
    <property type="term" value="P:transforming growth factor beta receptor signaling pathway"/>
    <property type="evidence" value="ECO:0007669"/>
    <property type="project" value="Ensembl"/>
</dbReference>
<dbReference type="GO" id="GO:0019082">
    <property type="term" value="P:viral protein processing"/>
    <property type="evidence" value="ECO:0000304"/>
    <property type="project" value="Reactome"/>
</dbReference>
<dbReference type="CDD" id="cd11300">
    <property type="entry name" value="Fut8_like"/>
    <property type="match status" value="1"/>
</dbReference>
<dbReference type="CDD" id="cd11792">
    <property type="entry name" value="SH3_Fut8"/>
    <property type="match status" value="1"/>
</dbReference>
<dbReference type="FunFam" id="1.10.287.1060:FF:000003">
    <property type="entry name" value="Alpha-(1,6)-fucosyltransferase"/>
    <property type="match status" value="1"/>
</dbReference>
<dbReference type="FunFam" id="2.30.30.40:FF:000070">
    <property type="entry name" value="Alpha-(1,6)-fucosyltransferase"/>
    <property type="match status" value="1"/>
</dbReference>
<dbReference type="FunFam" id="3.40.50.11350:FF:000001">
    <property type="entry name" value="Alpha-(1,6)-fucosyltransferase"/>
    <property type="match status" value="1"/>
</dbReference>
<dbReference type="Gene3D" id="3.40.50.11350">
    <property type="match status" value="1"/>
</dbReference>
<dbReference type="Gene3D" id="1.10.287.1060">
    <property type="entry name" value="ESAT-6-like"/>
    <property type="match status" value="1"/>
</dbReference>
<dbReference type="Gene3D" id="2.30.30.40">
    <property type="entry name" value="SH3 Domains"/>
    <property type="match status" value="1"/>
</dbReference>
<dbReference type="InterPro" id="IPR015827">
    <property type="entry name" value="Fut8"/>
</dbReference>
<dbReference type="InterPro" id="IPR045573">
    <property type="entry name" value="Fut8_N_cat"/>
</dbReference>
<dbReference type="InterPro" id="IPR035653">
    <property type="entry name" value="Fut8_SH3"/>
</dbReference>
<dbReference type="InterPro" id="IPR027350">
    <property type="entry name" value="GT23_dom"/>
</dbReference>
<dbReference type="InterPro" id="IPR036028">
    <property type="entry name" value="SH3-like_dom_sf"/>
</dbReference>
<dbReference type="InterPro" id="IPR001452">
    <property type="entry name" value="SH3_domain"/>
</dbReference>
<dbReference type="PANTHER" id="PTHR13132">
    <property type="entry name" value="ALPHA- 1,6 -FUCOSYLTRANSFERASE"/>
    <property type="match status" value="1"/>
</dbReference>
<dbReference type="PANTHER" id="PTHR13132:SF29">
    <property type="entry name" value="ALPHA-(1,6)-FUCOSYLTRANSFERASE"/>
    <property type="match status" value="1"/>
</dbReference>
<dbReference type="Pfam" id="PF19745">
    <property type="entry name" value="FUT8_N_cat"/>
    <property type="match status" value="1"/>
</dbReference>
<dbReference type="Pfam" id="PF14604">
    <property type="entry name" value="SH3_9"/>
    <property type="match status" value="1"/>
</dbReference>
<dbReference type="PIRSF" id="PIRSF000472">
    <property type="entry name" value="Alpha1_6FUT_euk"/>
    <property type="match status" value="1"/>
</dbReference>
<dbReference type="SMART" id="SM00326">
    <property type="entry name" value="SH3"/>
    <property type="match status" value="1"/>
</dbReference>
<dbReference type="SUPFAM" id="SSF50044">
    <property type="entry name" value="SH3-domain"/>
    <property type="match status" value="1"/>
</dbReference>
<dbReference type="PROSITE" id="PS51659">
    <property type="entry name" value="GT23"/>
    <property type="match status" value="1"/>
</dbReference>
<dbReference type="PROSITE" id="PS50002">
    <property type="entry name" value="SH3"/>
    <property type="match status" value="1"/>
</dbReference>
<accession>Q9BYC5</accession>
<accession>B4DFS7</accession>
<accession>G3V5N0</accession>
<accession>O00235</accession>
<accession>Q8IUA5</accession>
<accession>Q9BYC6</accession>
<accession>Q9P2U5</accession>
<accession>Q9P2U6</accession>